<geneLocation type="mitochondrion"/>
<sequence length="491" mass="55155">MIFHKNWLGLIFLLLFLGIINVMRVPRDNSVKLKRTALEWSLATLTATLILWAAFDMEGQFQTINQTEWIVPPALNFKWGPLFLAVDGISLFFLILTALLTPICILISWNSIKFLLKEFLLCLLFLEVLLMGVFSALDLLLFYILFEGILIPMFLLIGVWGSREEKVRASYYFFFYTFVGSVFMLLGIFQLYSSVGTTDYQALLNIELPISTQKWIFAGFFLSLAVKIPQVPFHIWLPQAHVEAPVSGSVILAGILLKLGGYGFLRFTWPILPAATEYFAPFVIMLSVIAIIYGSLTTCRQVDLKRLIAYSSVAHMGLVTLGLFTHTIEGLVAAVFMMLAHGLVSSALFIAVTYLYERHHTRLIKYYRGITFSMPIFVSVFLVLTLTNMAIPLSCNFVAEFFSLLAAFEYNIVIGVLAATGMVWSAAYSLYLYNRVSFGASSNYLLFTRDLNRRELIAISPLVILIFILGVLPSLIIDPVKNAIMFSPGGA</sequence>
<reference key="1">
    <citation type="journal article" date="1994" name="J. Mol. Evol.">
        <title>Mitochondrial DNA of the sea anemone, Metridium senile (Cnidaria): prokaryote-like genes for tRNA(f-Met) and small-subunit ribosomal RNA, and standard genetic code specificities for AGR and ATA codons.</title>
        <authorList>
            <person name="Pont-Kingdon G.A."/>
            <person name="Beagley C.T."/>
            <person name="Okimoto R."/>
            <person name="Wolstenholme D.R."/>
        </authorList>
    </citation>
    <scope>NUCLEOTIDE SEQUENCE [GENOMIC DNA]</scope>
</reference>
<reference key="2">
    <citation type="submission" date="1997-04" db="EMBL/GenBank/DDBJ databases">
        <authorList>
            <person name="Beagley C.T."/>
            <person name="Okimoto R."/>
            <person name="Wolstenholme D.R."/>
        </authorList>
    </citation>
    <scope>NUCLEOTIDE SEQUENCE [GENOMIC DNA]</scope>
    <source>
        <strain>White morph</strain>
    </source>
</reference>
<gene>
    <name type="primary">ND4</name>
</gene>
<organism>
    <name type="scientific">Metridium senile</name>
    <name type="common">Brown sea anemone</name>
    <name type="synonym">Frilled sea anemone</name>
    <dbReference type="NCBI Taxonomy" id="6116"/>
    <lineage>
        <taxon>Eukaryota</taxon>
        <taxon>Metazoa</taxon>
        <taxon>Cnidaria</taxon>
        <taxon>Anthozoa</taxon>
        <taxon>Hexacorallia</taxon>
        <taxon>Actiniaria</taxon>
        <taxon>Nynantheae</taxon>
        <taxon>Metridiidae</taxon>
        <taxon>Metridium</taxon>
    </lineage>
</organism>
<dbReference type="EC" id="7.1.1.2"/>
<dbReference type="EMBL" id="S75445">
    <property type="protein sequence ID" value="AAB32499.1"/>
    <property type="molecule type" value="Genomic_DNA"/>
</dbReference>
<dbReference type="EMBL" id="AF000023">
    <property type="protein sequence ID" value="AAC04640.1"/>
    <property type="molecule type" value="Genomic_DNA"/>
</dbReference>
<dbReference type="PIR" id="T11894">
    <property type="entry name" value="T11894"/>
</dbReference>
<dbReference type="RefSeq" id="NP_009263.1">
    <property type="nucleotide sequence ID" value="NC_000933.1"/>
</dbReference>
<dbReference type="SMR" id="O47497"/>
<dbReference type="GeneID" id="808779"/>
<dbReference type="CTD" id="4538"/>
<dbReference type="GO" id="GO:0031966">
    <property type="term" value="C:mitochondrial membrane"/>
    <property type="evidence" value="ECO:0007669"/>
    <property type="project" value="UniProtKB-SubCell"/>
</dbReference>
<dbReference type="GO" id="GO:0008137">
    <property type="term" value="F:NADH dehydrogenase (ubiquinone) activity"/>
    <property type="evidence" value="ECO:0007669"/>
    <property type="project" value="UniProtKB-EC"/>
</dbReference>
<dbReference type="GO" id="GO:0048039">
    <property type="term" value="F:ubiquinone binding"/>
    <property type="evidence" value="ECO:0007669"/>
    <property type="project" value="TreeGrafter"/>
</dbReference>
<dbReference type="GO" id="GO:0042773">
    <property type="term" value="P:ATP synthesis coupled electron transport"/>
    <property type="evidence" value="ECO:0007669"/>
    <property type="project" value="InterPro"/>
</dbReference>
<dbReference type="GO" id="GO:0015990">
    <property type="term" value="P:electron transport coupled proton transport"/>
    <property type="evidence" value="ECO:0007669"/>
    <property type="project" value="TreeGrafter"/>
</dbReference>
<dbReference type="InterPro" id="IPR010227">
    <property type="entry name" value="NADH_Q_OxRdtase_chainM/4"/>
</dbReference>
<dbReference type="InterPro" id="IPR003918">
    <property type="entry name" value="NADH_UbQ_OxRdtase"/>
</dbReference>
<dbReference type="InterPro" id="IPR001750">
    <property type="entry name" value="ND/Mrp_TM"/>
</dbReference>
<dbReference type="NCBIfam" id="TIGR01972">
    <property type="entry name" value="NDH_I_M"/>
    <property type="match status" value="1"/>
</dbReference>
<dbReference type="PANTHER" id="PTHR43507">
    <property type="entry name" value="NADH-UBIQUINONE OXIDOREDUCTASE CHAIN 4"/>
    <property type="match status" value="1"/>
</dbReference>
<dbReference type="PANTHER" id="PTHR43507:SF1">
    <property type="entry name" value="NADH-UBIQUINONE OXIDOREDUCTASE CHAIN 4"/>
    <property type="match status" value="1"/>
</dbReference>
<dbReference type="Pfam" id="PF00361">
    <property type="entry name" value="Proton_antipo_M"/>
    <property type="match status" value="1"/>
</dbReference>
<dbReference type="PRINTS" id="PR01437">
    <property type="entry name" value="NUOXDRDTASE4"/>
</dbReference>
<comment type="function">
    <text evidence="1">Core subunit of the mitochondrial membrane respiratory chain NADH dehydrogenase (Complex I) that is believed to belong to the minimal assembly required for catalysis. Complex I functions in the transfer of electrons from NADH to the respiratory chain. The immediate electron acceptor for the enzyme is believed to be ubiquinone (By similarity).</text>
</comment>
<comment type="catalytic activity">
    <reaction>
        <text>a ubiquinone + NADH + 5 H(+)(in) = a ubiquinol + NAD(+) + 4 H(+)(out)</text>
        <dbReference type="Rhea" id="RHEA:29091"/>
        <dbReference type="Rhea" id="RHEA-COMP:9565"/>
        <dbReference type="Rhea" id="RHEA-COMP:9566"/>
        <dbReference type="ChEBI" id="CHEBI:15378"/>
        <dbReference type="ChEBI" id="CHEBI:16389"/>
        <dbReference type="ChEBI" id="CHEBI:17976"/>
        <dbReference type="ChEBI" id="CHEBI:57540"/>
        <dbReference type="ChEBI" id="CHEBI:57945"/>
        <dbReference type="EC" id="7.1.1.2"/>
    </reaction>
</comment>
<comment type="subcellular location">
    <subcellularLocation>
        <location evidence="1">Mitochondrion membrane</location>
        <topology evidence="1">Multi-pass membrane protein</topology>
    </subcellularLocation>
</comment>
<comment type="similarity">
    <text evidence="3">Belongs to the complex I subunit 4 family.</text>
</comment>
<name>NU4M_METSE</name>
<accession>O47497</accession>
<protein>
    <recommendedName>
        <fullName>NADH-ubiquinone oxidoreductase chain 4</fullName>
        <ecNumber>7.1.1.2</ecNumber>
    </recommendedName>
    <alternativeName>
        <fullName>NADH dehydrogenase subunit 4</fullName>
    </alternativeName>
</protein>
<evidence type="ECO:0000250" key="1"/>
<evidence type="ECO:0000255" key="2"/>
<evidence type="ECO:0000305" key="3"/>
<feature type="chain" id="PRO_0000117954" description="NADH-ubiquinone oxidoreductase chain 4">
    <location>
        <begin position="1"/>
        <end position="491"/>
    </location>
</feature>
<feature type="transmembrane region" description="Helical" evidence="2">
    <location>
        <begin position="2"/>
        <end position="22"/>
    </location>
</feature>
<feature type="transmembrane region" description="Helical" evidence="2">
    <location>
        <begin position="37"/>
        <end position="57"/>
    </location>
</feature>
<feature type="transmembrane region" description="Helical" evidence="2">
    <location>
        <begin position="89"/>
        <end position="109"/>
    </location>
</feature>
<feature type="transmembrane region" description="Helical" evidence="2">
    <location>
        <begin position="114"/>
        <end position="134"/>
    </location>
</feature>
<feature type="transmembrane region" description="Helical" evidence="2">
    <location>
        <begin position="139"/>
        <end position="159"/>
    </location>
</feature>
<feature type="transmembrane region" description="Helical" evidence="2">
    <location>
        <begin position="169"/>
        <end position="189"/>
    </location>
</feature>
<feature type="transmembrane region" description="Helical" evidence="2">
    <location>
        <begin position="215"/>
        <end position="235"/>
    </location>
</feature>
<feature type="transmembrane region" description="Helical" evidence="2">
    <location>
        <begin position="245"/>
        <end position="265"/>
    </location>
</feature>
<feature type="transmembrane region" description="Helical" evidence="2">
    <location>
        <begin position="271"/>
        <end position="291"/>
    </location>
</feature>
<feature type="transmembrane region" description="Helical" evidence="2">
    <location>
        <begin position="308"/>
        <end position="328"/>
    </location>
</feature>
<feature type="transmembrane region" description="Helical" evidence="2">
    <location>
        <begin position="332"/>
        <end position="352"/>
    </location>
</feature>
<feature type="transmembrane region" description="Helical" evidence="2">
    <location>
        <begin position="372"/>
        <end position="392"/>
    </location>
</feature>
<feature type="transmembrane region" description="Helical" evidence="2">
    <location>
        <begin position="412"/>
        <end position="432"/>
    </location>
</feature>
<feature type="transmembrane region" description="Helical" evidence="2">
    <location>
        <begin position="457"/>
        <end position="477"/>
    </location>
</feature>
<keyword id="KW-0249">Electron transport</keyword>
<keyword id="KW-0472">Membrane</keyword>
<keyword id="KW-0496">Mitochondrion</keyword>
<keyword id="KW-0520">NAD</keyword>
<keyword id="KW-0679">Respiratory chain</keyword>
<keyword id="KW-1278">Translocase</keyword>
<keyword id="KW-0812">Transmembrane</keyword>
<keyword id="KW-1133">Transmembrane helix</keyword>
<keyword id="KW-0813">Transport</keyword>
<keyword id="KW-0830">Ubiquinone</keyword>
<proteinExistence type="inferred from homology"/>